<gene>
    <name evidence="1" type="primary">gpmI</name>
    <name type="ordered locus">Sfri_4021</name>
</gene>
<sequence length="513" mass="55922">MAKKRPLALLILDGWGYSEDTQDNAVFHANTPVLDKLNAQYPHSLISGSGIDVGLPDGQMGNSEVGHINIGSGRIVYQELTRISKAIADHEFEQNAALCDAVDKAIAANGAVHIMGLLSAGGVHSHEEHIEAMCRMAVERGATKVYLHAFLDGRDTPPRSAKNSLVHFDELFASLGHGRTASIIGRYFAMDRDNRWDRVSQAYELITEAKGKFTYASAPEALEAAYARDENDEFVAASAIVDAQGEAAVLSDNDSLIFMNFRADRARQITRTFVNPDFDGFKRNKTPKINFVMLTDYAADINAPVAYPSSDLVNTLGETLQNLDKTQLRISETEKYAHVTFFFNGGKEEPFEGEDRILIQSPKVATYDLQPEMSSTELTDKLVAAIESTKYDVIICNYPNGDMVGHSGNFDAAVKACEAVDACIGRVVEALAKVDGECLITADHGNAEKMKDPSNGQAFTAHTSNLVPFVYVGRDAVIKDGGRLSDIAPTMLTLMGQSIPKEMSGRCIIDLKE</sequence>
<organism>
    <name type="scientific">Shewanella frigidimarina (strain NCIMB 400)</name>
    <dbReference type="NCBI Taxonomy" id="318167"/>
    <lineage>
        <taxon>Bacteria</taxon>
        <taxon>Pseudomonadati</taxon>
        <taxon>Pseudomonadota</taxon>
        <taxon>Gammaproteobacteria</taxon>
        <taxon>Alteromonadales</taxon>
        <taxon>Shewanellaceae</taxon>
        <taxon>Shewanella</taxon>
    </lineage>
</organism>
<proteinExistence type="inferred from homology"/>
<protein>
    <recommendedName>
        <fullName evidence="1">2,3-bisphosphoglycerate-independent phosphoglycerate mutase</fullName>
        <shortName evidence="1">BPG-independent PGAM</shortName>
        <shortName evidence="1">Phosphoglyceromutase</shortName>
        <shortName evidence="1">iPGM</shortName>
        <ecNumber evidence="1">5.4.2.12</ecNumber>
    </recommendedName>
</protein>
<name>GPMI_SHEFN</name>
<evidence type="ECO:0000255" key="1">
    <source>
        <dbReference type="HAMAP-Rule" id="MF_01038"/>
    </source>
</evidence>
<keyword id="KW-0324">Glycolysis</keyword>
<keyword id="KW-0413">Isomerase</keyword>
<keyword id="KW-0464">Manganese</keyword>
<keyword id="KW-0479">Metal-binding</keyword>
<keyword id="KW-1185">Reference proteome</keyword>
<reference key="1">
    <citation type="submission" date="2006-08" db="EMBL/GenBank/DDBJ databases">
        <title>Complete sequence of Shewanella frigidimarina NCIMB 400.</title>
        <authorList>
            <consortium name="US DOE Joint Genome Institute"/>
            <person name="Copeland A."/>
            <person name="Lucas S."/>
            <person name="Lapidus A."/>
            <person name="Barry K."/>
            <person name="Detter J.C."/>
            <person name="Glavina del Rio T."/>
            <person name="Hammon N."/>
            <person name="Israni S."/>
            <person name="Dalin E."/>
            <person name="Tice H."/>
            <person name="Pitluck S."/>
            <person name="Fredrickson J.K."/>
            <person name="Kolker E."/>
            <person name="McCuel L.A."/>
            <person name="DiChristina T."/>
            <person name="Nealson K.H."/>
            <person name="Newman D."/>
            <person name="Tiedje J.M."/>
            <person name="Zhou J."/>
            <person name="Romine M.F."/>
            <person name="Culley D.E."/>
            <person name="Serres M."/>
            <person name="Chertkov O."/>
            <person name="Brettin T."/>
            <person name="Bruce D."/>
            <person name="Han C."/>
            <person name="Tapia R."/>
            <person name="Gilna P."/>
            <person name="Schmutz J."/>
            <person name="Larimer F."/>
            <person name="Land M."/>
            <person name="Hauser L."/>
            <person name="Kyrpides N."/>
            <person name="Mikhailova N."/>
            <person name="Richardson P."/>
        </authorList>
    </citation>
    <scope>NUCLEOTIDE SEQUENCE [LARGE SCALE GENOMIC DNA]</scope>
    <source>
        <strain>NCIMB 400</strain>
    </source>
</reference>
<accession>Q07VW8</accession>
<feature type="chain" id="PRO_1000135908" description="2,3-bisphosphoglycerate-independent phosphoglycerate mutase">
    <location>
        <begin position="1"/>
        <end position="513"/>
    </location>
</feature>
<feature type="active site" description="Phosphoserine intermediate" evidence="1">
    <location>
        <position position="63"/>
    </location>
</feature>
<feature type="binding site" evidence="1">
    <location>
        <position position="13"/>
    </location>
    <ligand>
        <name>Mn(2+)</name>
        <dbReference type="ChEBI" id="CHEBI:29035"/>
        <label>2</label>
    </ligand>
</feature>
<feature type="binding site" evidence="1">
    <location>
        <position position="63"/>
    </location>
    <ligand>
        <name>Mn(2+)</name>
        <dbReference type="ChEBI" id="CHEBI:29035"/>
        <label>2</label>
    </ligand>
</feature>
<feature type="binding site" evidence="1">
    <location>
        <position position="124"/>
    </location>
    <ligand>
        <name>substrate</name>
    </ligand>
</feature>
<feature type="binding site" evidence="1">
    <location>
        <begin position="154"/>
        <end position="155"/>
    </location>
    <ligand>
        <name>substrate</name>
    </ligand>
</feature>
<feature type="binding site" evidence="1">
    <location>
        <position position="186"/>
    </location>
    <ligand>
        <name>substrate</name>
    </ligand>
</feature>
<feature type="binding site" evidence="1">
    <location>
        <position position="192"/>
    </location>
    <ligand>
        <name>substrate</name>
    </ligand>
</feature>
<feature type="binding site" evidence="1">
    <location>
        <begin position="262"/>
        <end position="265"/>
    </location>
    <ligand>
        <name>substrate</name>
    </ligand>
</feature>
<feature type="binding site" evidence="1">
    <location>
        <position position="335"/>
    </location>
    <ligand>
        <name>substrate</name>
    </ligand>
</feature>
<feature type="binding site" evidence="1">
    <location>
        <position position="402"/>
    </location>
    <ligand>
        <name>Mn(2+)</name>
        <dbReference type="ChEBI" id="CHEBI:29035"/>
        <label>1</label>
    </ligand>
</feature>
<feature type="binding site" evidence="1">
    <location>
        <position position="406"/>
    </location>
    <ligand>
        <name>Mn(2+)</name>
        <dbReference type="ChEBI" id="CHEBI:29035"/>
        <label>1</label>
    </ligand>
</feature>
<feature type="binding site" evidence="1">
    <location>
        <position position="443"/>
    </location>
    <ligand>
        <name>Mn(2+)</name>
        <dbReference type="ChEBI" id="CHEBI:29035"/>
        <label>2</label>
    </ligand>
</feature>
<feature type="binding site" evidence="1">
    <location>
        <position position="444"/>
    </location>
    <ligand>
        <name>Mn(2+)</name>
        <dbReference type="ChEBI" id="CHEBI:29035"/>
        <label>2</label>
    </ligand>
</feature>
<feature type="binding site" evidence="1">
    <location>
        <position position="462"/>
    </location>
    <ligand>
        <name>Mn(2+)</name>
        <dbReference type="ChEBI" id="CHEBI:29035"/>
        <label>1</label>
    </ligand>
</feature>
<dbReference type="EC" id="5.4.2.12" evidence="1"/>
<dbReference type="EMBL" id="CP000447">
    <property type="protein sequence ID" value="ABI73846.1"/>
    <property type="molecule type" value="Genomic_DNA"/>
</dbReference>
<dbReference type="RefSeq" id="WP_011639426.1">
    <property type="nucleotide sequence ID" value="NC_008345.1"/>
</dbReference>
<dbReference type="SMR" id="Q07VW8"/>
<dbReference type="STRING" id="318167.Sfri_4021"/>
<dbReference type="KEGG" id="sfr:Sfri_4021"/>
<dbReference type="eggNOG" id="COG0696">
    <property type="taxonomic scope" value="Bacteria"/>
</dbReference>
<dbReference type="HOGENOM" id="CLU_026099_2_0_6"/>
<dbReference type="OrthoDB" id="9800863at2"/>
<dbReference type="UniPathway" id="UPA00109">
    <property type="reaction ID" value="UER00186"/>
</dbReference>
<dbReference type="Proteomes" id="UP000000684">
    <property type="component" value="Chromosome"/>
</dbReference>
<dbReference type="GO" id="GO:0005829">
    <property type="term" value="C:cytosol"/>
    <property type="evidence" value="ECO:0007669"/>
    <property type="project" value="TreeGrafter"/>
</dbReference>
<dbReference type="GO" id="GO:0030145">
    <property type="term" value="F:manganese ion binding"/>
    <property type="evidence" value="ECO:0007669"/>
    <property type="project" value="UniProtKB-UniRule"/>
</dbReference>
<dbReference type="GO" id="GO:0004619">
    <property type="term" value="F:phosphoglycerate mutase activity"/>
    <property type="evidence" value="ECO:0007669"/>
    <property type="project" value="UniProtKB-EC"/>
</dbReference>
<dbReference type="GO" id="GO:0006007">
    <property type="term" value="P:glucose catabolic process"/>
    <property type="evidence" value="ECO:0007669"/>
    <property type="project" value="InterPro"/>
</dbReference>
<dbReference type="GO" id="GO:0006096">
    <property type="term" value="P:glycolytic process"/>
    <property type="evidence" value="ECO:0007669"/>
    <property type="project" value="UniProtKB-UniRule"/>
</dbReference>
<dbReference type="CDD" id="cd16010">
    <property type="entry name" value="iPGM"/>
    <property type="match status" value="1"/>
</dbReference>
<dbReference type="FunFam" id="3.40.1450.10:FF:000001">
    <property type="entry name" value="2,3-bisphosphoglycerate-independent phosphoglycerate mutase"/>
    <property type="match status" value="1"/>
</dbReference>
<dbReference type="FunFam" id="3.40.720.10:FF:000001">
    <property type="entry name" value="2,3-bisphosphoglycerate-independent phosphoglycerate mutase"/>
    <property type="match status" value="1"/>
</dbReference>
<dbReference type="Gene3D" id="3.40.720.10">
    <property type="entry name" value="Alkaline Phosphatase, subunit A"/>
    <property type="match status" value="1"/>
</dbReference>
<dbReference type="Gene3D" id="3.40.1450.10">
    <property type="entry name" value="BPG-independent phosphoglycerate mutase, domain B"/>
    <property type="match status" value="1"/>
</dbReference>
<dbReference type="HAMAP" id="MF_01038">
    <property type="entry name" value="GpmI"/>
    <property type="match status" value="1"/>
</dbReference>
<dbReference type="InterPro" id="IPR017850">
    <property type="entry name" value="Alkaline_phosphatase_core_sf"/>
</dbReference>
<dbReference type="InterPro" id="IPR011258">
    <property type="entry name" value="BPG-indep_PGM_N"/>
</dbReference>
<dbReference type="InterPro" id="IPR006124">
    <property type="entry name" value="Metalloenzyme"/>
</dbReference>
<dbReference type="InterPro" id="IPR036646">
    <property type="entry name" value="PGAM_B_sf"/>
</dbReference>
<dbReference type="InterPro" id="IPR005995">
    <property type="entry name" value="Pgm_bpd_ind"/>
</dbReference>
<dbReference type="NCBIfam" id="TIGR01307">
    <property type="entry name" value="pgm_bpd_ind"/>
    <property type="match status" value="1"/>
</dbReference>
<dbReference type="NCBIfam" id="NF003897">
    <property type="entry name" value="PRK05434.1-5"/>
    <property type="match status" value="1"/>
</dbReference>
<dbReference type="PANTHER" id="PTHR31637">
    <property type="entry name" value="2,3-BISPHOSPHOGLYCERATE-INDEPENDENT PHOSPHOGLYCERATE MUTASE"/>
    <property type="match status" value="1"/>
</dbReference>
<dbReference type="PANTHER" id="PTHR31637:SF0">
    <property type="entry name" value="2,3-BISPHOSPHOGLYCERATE-INDEPENDENT PHOSPHOGLYCERATE MUTASE"/>
    <property type="match status" value="1"/>
</dbReference>
<dbReference type="Pfam" id="PF06415">
    <property type="entry name" value="iPGM_N"/>
    <property type="match status" value="1"/>
</dbReference>
<dbReference type="Pfam" id="PF01676">
    <property type="entry name" value="Metalloenzyme"/>
    <property type="match status" value="1"/>
</dbReference>
<dbReference type="PIRSF" id="PIRSF001492">
    <property type="entry name" value="IPGAM"/>
    <property type="match status" value="1"/>
</dbReference>
<dbReference type="SUPFAM" id="SSF64158">
    <property type="entry name" value="2,3-Bisphosphoglycerate-independent phosphoglycerate mutase, substrate-binding domain"/>
    <property type="match status" value="1"/>
</dbReference>
<dbReference type="SUPFAM" id="SSF53649">
    <property type="entry name" value="Alkaline phosphatase-like"/>
    <property type="match status" value="1"/>
</dbReference>
<comment type="function">
    <text evidence="1">Catalyzes the interconversion of 2-phosphoglycerate and 3-phosphoglycerate.</text>
</comment>
<comment type="catalytic activity">
    <reaction evidence="1">
        <text>(2R)-2-phosphoglycerate = (2R)-3-phosphoglycerate</text>
        <dbReference type="Rhea" id="RHEA:15901"/>
        <dbReference type="ChEBI" id="CHEBI:58272"/>
        <dbReference type="ChEBI" id="CHEBI:58289"/>
        <dbReference type="EC" id="5.4.2.12"/>
    </reaction>
</comment>
<comment type="cofactor">
    <cofactor evidence="1">
        <name>Mn(2+)</name>
        <dbReference type="ChEBI" id="CHEBI:29035"/>
    </cofactor>
    <text evidence="1">Binds 2 manganese ions per subunit.</text>
</comment>
<comment type="pathway">
    <text evidence="1">Carbohydrate degradation; glycolysis; pyruvate from D-glyceraldehyde 3-phosphate: step 3/5.</text>
</comment>
<comment type="subunit">
    <text evidence="1">Monomer.</text>
</comment>
<comment type="similarity">
    <text evidence="1">Belongs to the BPG-independent phosphoglycerate mutase family.</text>
</comment>